<dbReference type="EC" id="2.7.7.-"/>
<dbReference type="EMBL" id="CP001956">
    <property type="protein sequence ID" value="ADE02576.1"/>
    <property type="molecule type" value="Genomic_DNA"/>
</dbReference>
<dbReference type="EMBL" id="AOHU01000040">
    <property type="protein sequence ID" value="ELY33650.1"/>
    <property type="molecule type" value="Genomic_DNA"/>
</dbReference>
<dbReference type="RefSeq" id="WP_004041941.1">
    <property type="nucleotide sequence ID" value="NC_013967.1"/>
</dbReference>
<dbReference type="SMR" id="D4GU70"/>
<dbReference type="STRING" id="309800.HVO_2057"/>
<dbReference type="PaxDb" id="309800-C498_05568"/>
<dbReference type="EnsemblBacteria" id="ADE02576">
    <property type="protein sequence ID" value="ADE02576"/>
    <property type="gene ID" value="HVO_2057"/>
</dbReference>
<dbReference type="GeneID" id="8924305"/>
<dbReference type="KEGG" id="hvo:HVO_2057"/>
<dbReference type="PATRIC" id="fig|309800.29.peg.1080"/>
<dbReference type="eggNOG" id="arCOG00667">
    <property type="taxonomic scope" value="Archaea"/>
</dbReference>
<dbReference type="HOGENOM" id="CLU_029499_0_1_2"/>
<dbReference type="OrthoDB" id="15372at2157"/>
<dbReference type="BioCyc" id="MetaCyc:MONOMER-18751"/>
<dbReference type="UniPathway" id="UPA00378"/>
<dbReference type="UniPathway" id="UPA00977"/>
<dbReference type="Proteomes" id="UP000008243">
    <property type="component" value="Chromosome"/>
</dbReference>
<dbReference type="Proteomes" id="UP000011532">
    <property type="component" value="Unassembled WGS sequence"/>
</dbReference>
<dbReference type="GO" id="GO:0046872">
    <property type="term" value="F:metal ion binding"/>
    <property type="evidence" value="ECO:0007669"/>
    <property type="project" value="UniProtKB-KW"/>
</dbReference>
<dbReference type="GO" id="GO:0016779">
    <property type="term" value="F:nucleotidyltransferase activity"/>
    <property type="evidence" value="ECO:0007669"/>
    <property type="project" value="UniProtKB-KW"/>
</dbReference>
<dbReference type="GO" id="GO:0006486">
    <property type="term" value="P:protein glycosylation"/>
    <property type="evidence" value="ECO:0007669"/>
    <property type="project" value="UniProtKB-UniPathway"/>
</dbReference>
<dbReference type="GO" id="GO:0045232">
    <property type="term" value="P:S-layer organization"/>
    <property type="evidence" value="ECO:0007669"/>
    <property type="project" value="UniProtKB-UniPathway"/>
</dbReference>
<dbReference type="CDD" id="cd04189">
    <property type="entry name" value="G1P_TT_long"/>
    <property type="match status" value="1"/>
</dbReference>
<dbReference type="Gene3D" id="2.160.10.10">
    <property type="entry name" value="Hexapeptide repeat proteins"/>
    <property type="match status" value="1"/>
</dbReference>
<dbReference type="Gene3D" id="3.90.550.10">
    <property type="entry name" value="Spore Coat Polysaccharide Biosynthesis Protein SpsA, Chain A"/>
    <property type="match status" value="1"/>
</dbReference>
<dbReference type="InterPro" id="IPR005908">
    <property type="entry name" value="G1P_thy_trans_l"/>
</dbReference>
<dbReference type="InterPro" id="IPR005835">
    <property type="entry name" value="NTP_transferase_dom"/>
</dbReference>
<dbReference type="InterPro" id="IPR029044">
    <property type="entry name" value="Nucleotide-diphossugar_trans"/>
</dbReference>
<dbReference type="NCBIfam" id="TIGR01208">
    <property type="entry name" value="rmlA_long"/>
    <property type="match status" value="1"/>
</dbReference>
<dbReference type="PANTHER" id="PTHR42883">
    <property type="entry name" value="GLUCOSE-1-PHOSPHATE THYMIDYLTRANSFERASE"/>
    <property type="match status" value="1"/>
</dbReference>
<dbReference type="PANTHER" id="PTHR42883:SF2">
    <property type="entry name" value="THYMIDYLYLTRANSFERASE"/>
    <property type="match status" value="1"/>
</dbReference>
<dbReference type="Pfam" id="PF00483">
    <property type="entry name" value="NTP_transferase"/>
    <property type="match status" value="1"/>
</dbReference>
<dbReference type="SUPFAM" id="SSF53448">
    <property type="entry name" value="Nucleotide-diphospho-sugar transferases"/>
    <property type="match status" value="1"/>
</dbReference>
<reference key="1">
    <citation type="journal article" date="2010" name="PLoS ONE">
        <title>The complete genome sequence of Haloferax volcanii DS2, a model archaeon.</title>
        <authorList>
            <person name="Hartman A.L."/>
            <person name="Norais C."/>
            <person name="Badger J.H."/>
            <person name="Delmas S."/>
            <person name="Haldenby S."/>
            <person name="Madupu R."/>
            <person name="Robinson J."/>
            <person name="Khouri H."/>
            <person name="Ren Q."/>
            <person name="Lowe T.M."/>
            <person name="Maupin-Furlow J."/>
            <person name="Pohlschroder M."/>
            <person name="Daniels C."/>
            <person name="Pfeiffer F."/>
            <person name="Allers T."/>
            <person name="Eisen J.A."/>
        </authorList>
    </citation>
    <scope>NUCLEOTIDE SEQUENCE [LARGE SCALE GENOMIC DNA]</scope>
    <source>
        <strain>ATCC 29605 / DSM 3757 / JCM 8879 / NBRC 14742 / NCIMB 2012 / VKM B-1768 / DS2</strain>
    </source>
</reference>
<reference key="2">
    <citation type="journal article" date="2014" name="PLoS Genet.">
        <title>Phylogenetically driven sequencing of extremely halophilic archaea reveals strategies for static and dynamic osmo-response.</title>
        <authorList>
            <person name="Becker E.A."/>
            <person name="Seitzer P.M."/>
            <person name="Tritt A."/>
            <person name="Larsen D."/>
            <person name="Krusor M."/>
            <person name="Yao A.I."/>
            <person name="Wu D."/>
            <person name="Madern D."/>
            <person name="Eisen J.A."/>
            <person name="Darling A.E."/>
            <person name="Facciotti M.T."/>
        </authorList>
    </citation>
    <scope>NUCLEOTIDE SEQUENCE [LARGE SCALE GENOMIC DNA]</scope>
    <source>
        <strain>ATCC 29605 / DSM 3757 / JCM 8879 / NBRC 14742 / NCIMB 2012 / VKM B-1768 / DS2</strain>
    </source>
</reference>
<reference key="3">
    <citation type="journal article" date="2013" name="MBio">
        <title>Two distinct N-glycosylation pathways process the Haloferax volcanii S-layer glycoprotein upon changes in environmental salinity.</title>
        <authorList>
            <person name="Kaminski L."/>
            <person name="Guan Z."/>
            <person name="Yurist-Doutsch S."/>
            <person name="Eichler J."/>
        </authorList>
    </citation>
    <scope>FUNCTION</scope>
    <scope>PATHWAY</scope>
    <scope>DISRUPTION PHENOTYPE</scope>
    <source>
        <strain>ATCC 29605 / DSM 3757 / JCM 8879 / NBRC 14742 / NCIMB 2012 / VKM B-1768 / DS2</strain>
    </source>
</reference>
<sequence>MKGVLLSGGTGSRLRPITHTGPKQLVPVANKPVLEYAVEDLKEAGITEIGVILGHKGREEIQNLLGDGSDYGVEITYIVQGNPLGLAHAAGCAKDFVGDDDFVMYLGDNILKEGVVDLVESFESGDFGAGIALQEVENPQQFGIADVDDQGNVTQLIEKPDEPPTNLALIGMYVFSPAVFDAIEQLEPSWRGELEITDAIQSLLEDGYAIDSHVVEGWWKDTGKPEDILEANQLVLEDKSLKKRGTVSDDATVDGRIELAESATIEDGAVVRGPVSIADGAVIKSGTYVGPYTSVGPNSTLEGVHIENSVVIGESSINTSGRIVDSLLGKGANIGSADDFLPEGRRLVVGENSQLKL</sequence>
<keyword id="KW-0460">Magnesium</keyword>
<keyword id="KW-0479">Metal-binding</keyword>
<keyword id="KW-0548">Nucleotidyltransferase</keyword>
<keyword id="KW-1185">Reference proteome</keyword>
<keyword id="KW-0808">Transferase</keyword>
<gene>
    <name type="primary">agl11</name>
    <name type="ordered locus">HVO_2057</name>
    <name type="ORF">C498_05568</name>
</gene>
<name>AGL11_HALVD</name>
<organism>
    <name type="scientific">Haloferax volcanii (strain ATCC 29605 / DSM 3757 / JCM 8879 / NBRC 14742 / NCIMB 2012 / VKM B-1768 / DS2)</name>
    <name type="common">Halobacterium volcanii</name>
    <dbReference type="NCBI Taxonomy" id="309800"/>
    <lineage>
        <taxon>Archaea</taxon>
        <taxon>Methanobacteriati</taxon>
        <taxon>Methanobacteriota</taxon>
        <taxon>Stenosarchaea group</taxon>
        <taxon>Halobacteria</taxon>
        <taxon>Halobacteriales</taxon>
        <taxon>Haloferacaceae</taxon>
        <taxon>Haloferax</taxon>
    </lineage>
</organism>
<accession>D4GU70</accession>
<protein>
    <recommendedName>
        <fullName>Low-salt glycan biosynthesis nucleotidyltransferase Agl11</fullName>
        <ecNumber>2.7.7.-</ecNumber>
    </recommendedName>
</protein>
<feature type="chain" id="PRO_0000428774" description="Low-salt glycan biosynthesis nucleotidyltransferase Agl11">
    <location>
        <begin position="1"/>
        <end position="357"/>
    </location>
</feature>
<feature type="binding site" evidence="1">
    <location>
        <position position="108"/>
    </location>
    <ligand>
        <name>Mg(2+)</name>
        <dbReference type="ChEBI" id="CHEBI:18420"/>
    </ligand>
</feature>
<feature type="binding site" evidence="1">
    <location>
        <position position="221"/>
    </location>
    <ligand>
        <name>Mg(2+)</name>
        <dbReference type="ChEBI" id="CHEBI:18420"/>
    </ligand>
</feature>
<proteinExistence type="inferred from homology"/>
<comment type="function">
    <text evidence="2">Nucleotidyltransferase involved in N-glycan biosynthetic pathway that takes place under low-salt conditions (1.75 M instead of 3.4 M). Participates in the formation of the tetrasaccharide present at 'Asn-532' of S-layer glycoprotein Csg, consisting of a sulfated hexose, 2 hexoses and rhamnose. Involved in the addition of final rhamnose (sugar 4) of the tetrasaccharide on the dolichol phosphate carrier.</text>
</comment>
<comment type="cofactor">
    <cofactor evidence="1">
        <name>Mg(2+)</name>
        <dbReference type="ChEBI" id="CHEBI:18420"/>
    </cofactor>
    <text evidence="1">Binds 1 Mg(2+) ion per subunit.</text>
</comment>
<comment type="pathway">
    <text evidence="2">Protein modification; protein glycosylation.</text>
</comment>
<comment type="pathway">
    <text evidence="2">Cell surface structure biogenesis; S-layer biogenesis.</text>
</comment>
<comment type="disruption phenotype">
    <text evidence="2">Impaired formation of the tetrasaccharide present at 'Asn-532' of S-layer glycoprotein Csg. No effect on 'Asn-47' and 'Asn-117' glycosylation of S-layer glycoprotein Csg.</text>
</comment>
<comment type="similarity">
    <text evidence="3">Belongs to the glucose-1-phosphate thymidylyltransferase family.</text>
</comment>
<evidence type="ECO:0000250" key="1">
    <source>
        <dbReference type="UniProtKB" id="P61887"/>
    </source>
</evidence>
<evidence type="ECO:0000269" key="2">
    <source>
    </source>
</evidence>
<evidence type="ECO:0000305" key="3"/>